<organism>
    <name type="scientific">Actinobacillus succinogenes (strain ATCC 55618 / DSM 22257 / CCUG 43843 / 130Z)</name>
    <dbReference type="NCBI Taxonomy" id="339671"/>
    <lineage>
        <taxon>Bacteria</taxon>
        <taxon>Pseudomonadati</taxon>
        <taxon>Pseudomonadota</taxon>
        <taxon>Gammaproteobacteria</taxon>
        <taxon>Pasteurellales</taxon>
        <taxon>Pasteurellaceae</taxon>
        <taxon>Actinobacillus</taxon>
    </lineage>
</organism>
<dbReference type="EC" id="2.5.1.75" evidence="1"/>
<dbReference type="EMBL" id="CP000746">
    <property type="protein sequence ID" value="ABR74356.1"/>
    <property type="molecule type" value="Genomic_DNA"/>
</dbReference>
<dbReference type="RefSeq" id="WP_012072733.1">
    <property type="nucleotide sequence ID" value="NC_009655.1"/>
</dbReference>
<dbReference type="SMR" id="A6VN09"/>
<dbReference type="STRING" id="339671.Asuc_0988"/>
<dbReference type="KEGG" id="asu:Asuc_0988"/>
<dbReference type="eggNOG" id="COG0324">
    <property type="taxonomic scope" value="Bacteria"/>
</dbReference>
<dbReference type="HOGENOM" id="CLU_032616_0_0_6"/>
<dbReference type="OrthoDB" id="9776390at2"/>
<dbReference type="Proteomes" id="UP000001114">
    <property type="component" value="Chromosome"/>
</dbReference>
<dbReference type="GO" id="GO:0005524">
    <property type="term" value="F:ATP binding"/>
    <property type="evidence" value="ECO:0007669"/>
    <property type="project" value="UniProtKB-UniRule"/>
</dbReference>
<dbReference type="GO" id="GO:0052381">
    <property type="term" value="F:tRNA dimethylallyltransferase activity"/>
    <property type="evidence" value="ECO:0007669"/>
    <property type="project" value="UniProtKB-UniRule"/>
</dbReference>
<dbReference type="GO" id="GO:0006400">
    <property type="term" value="P:tRNA modification"/>
    <property type="evidence" value="ECO:0007669"/>
    <property type="project" value="TreeGrafter"/>
</dbReference>
<dbReference type="FunFam" id="1.10.20.140:FF:000001">
    <property type="entry name" value="tRNA dimethylallyltransferase"/>
    <property type="match status" value="1"/>
</dbReference>
<dbReference type="Gene3D" id="1.10.20.140">
    <property type="match status" value="1"/>
</dbReference>
<dbReference type="Gene3D" id="3.40.50.300">
    <property type="entry name" value="P-loop containing nucleotide triphosphate hydrolases"/>
    <property type="match status" value="1"/>
</dbReference>
<dbReference type="HAMAP" id="MF_00185">
    <property type="entry name" value="IPP_trans"/>
    <property type="match status" value="1"/>
</dbReference>
<dbReference type="InterPro" id="IPR039657">
    <property type="entry name" value="Dimethylallyltransferase"/>
</dbReference>
<dbReference type="InterPro" id="IPR018022">
    <property type="entry name" value="IPT"/>
</dbReference>
<dbReference type="InterPro" id="IPR027417">
    <property type="entry name" value="P-loop_NTPase"/>
</dbReference>
<dbReference type="NCBIfam" id="TIGR00174">
    <property type="entry name" value="miaA"/>
    <property type="match status" value="1"/>
</dbReference>
<dbReference type="PANTHER" id="PTHR11088">
    <property type="entry name" value="TRNA DIMETHYLALLYLTRANSFERASE"/>
    <property type="match status" value="1"/>
</dbReference>
<dbReference type="PANTHER" id="PTHR11088:SF60">
    <property type="entry name" value="TRNA DIMETHYLALLYLTRANSFERASE"/>
    <property type="match status" value="1"/>
</dbReference>
<dbReference type="Pfam" id="PF01715">
    <property type="entry name" value="IPPT"/>
    <property type="match status" value="1"/>
</dbReference>
<dbReference type="SUPFAM" id="SSF52540">
    <property type="entry name" value="P-loop containing nucleoside triphosphate hydrolases"/>
    <property type="match status" value="1"/>
</dbReference>
<name>MIAA_ACTSZ</name>
<reference key="1">
    <citation type="journal article" date="2010" name="BMC Genomics">
        <title>A genomic perspective on the potential of Actinobacillus succinogenes for industrial succinate production.</title>
        <authorList>
            <person name="McKinlay J.B."/>
            <person name="Laivenieks M."/>
            <person name="Schindler B.D."/>
            <person name="McKinlay A.A."/>
            <person name="Siddaramappa S."/>
            <person name="Challacombe J.F."/>
            <person name="Lowry S.R."/>
            <person name="Clum A."/>
            <person name="Lapidus A.L."/>
            <person name="Burkhart K.B."/>
            <person name="Harkins V."/>
            <person name="Vieille C."/>
        </authorList>
    </citation>
    <scope>NUCLEOTIDE SEQUENCE [LARGE SCALE GENOMIC DNA]</scope>
    <source>
        <strain>ATCC 55618 / DSM 22257 / CCUG 43843 / 130Z</strain>
    </source>
</reference>
<protein>
    <recommendedName>
        <fullName evidence="1">tRNA dimethylallyltransferase</fullName>
        <ecNumber evidence="1">2.5.1.75</ecNumber>
    </recommendedName>
    <alternativeName>
        <fullName evidence="1">Dimethylallyl diphosphate:tRNA dimethylallyltransferase</fullName>
        <shortName evidence="1">DMAPP:tRNA dimethylallyltransferase</shortName>
        <shortName evidence="1">DMATase</shortName>
    </alternativeName>
    <alternativeName>
        <fullName evidence="1">Isopentenyl-diphosphate:tRNA isopentenyltransferase</fullName>
        <shortName evidence="1">IPP transferase</shortName>
        <shortName evidence="1">IPPT</shortName>
        <shortName evidence="1">IPTase</shortName>
    </alternativeName>
</protein>
<sequence>MQNNSTSFPTAIFLMGPTASGKTDLAIKLHETLPVEIISVDSALIYKGMDIGTAKPSKEELALAPHRLIDILDPAESYSAMNFRADALREMTDITAQGKIPLLVGGTMLYYKALIEGLSPLPNADEKIRSEIEARAQQTGWAVLHQELAKIDPASAARINPNDSQRINRALEVFYLTGKSLTELTAQKGDALPYNVLQFAIAPEDRSILHERIELRFKKMVELGFKAEVEKLYARSDLSPDLPSIRCVGYRQMWEHLRGDYGFDEAIYRGICATRQLAKRQITWLRGWKTPIRWLNSLQNEKNQKKIQQVFYLSMQNR</sequence>
<evidence type="ECO:0000255" key="1">
    <source>
        <dbReference type="HAMAP-Rule" id="MF_00185"/>
    </source>
</evidence>
<gene>
    <name evidence="1" type="primary">miaA</name>
    <name type="ordered locus">Asuc_0988</name>
</gene>
<proteinExistence type="inferred from homology"/>
<comment type="function">
    <text evidence="1">Catalyzes the transfer of a dimethylallyl group onto the adenine at position 37 in tRNAs that read codons beginning with uridine, leading to the formation of N6-(dimethylallyl)adenosine (i(6)A).</text>
</comment>
<comment type="catalytic activity">
    <reaction evidence="1">
        <text>adenosine(37) in tRNA + dimethylallyl diphosphate = N(6)-dimethylallyladenosine(37) in tRNA + diphosphate</text>
        <dbReference type="Rhea" id="RHEA:26482"/>
        <dbReference type="Rhea" id="RHEA-COMP:10162"/>
        <dbReference type="Rhea" id="RHEA-COMP:10375"/>
        <dbReference type="ChEBI" id="CHEBI:33019"/>
        <dbReference type="ChEBI" id="CHEBI:57623"/>
        <dbReference type="ChEBI" id="CHEBI:74411"/>
        <dbReference type="ChEBI" id="CHEBI:74415"/>
        <dbReference type="EC" id="2.5.1.75"/>
    </reaction>
</comment>
<comment type="cofactor">
    <cofactor evidence="1">
        <name>Mg(2+)</name>
        <dbReference type="ChEBI" id="CHEBI:18420"/>
    </cofactor>
</comment>
<comment type="subunit">
    <text evidence="1">Monomer.</text>
</comment>
<comment type="similarity">
    <text evidence="1">Belongs to the IPP transferase family.</text>
</comment>
<keyword id="KW-0067">ATP-binding</keyword>
<keyword id="KW-0460">Magnesium</keyword>
<keyword id="KW-0547">Nucleotide-binding</keyword>
<keyword id="KW-1185">Reference proteome</keyword>
<keyword id="KW-0808">Transferase</keyword>
<keyword id="KW-0819">tRNA processing</keyword>
<feature type="chain" id="PRO_0000377051" description="tRNA dimethylallyltransferase">
    <location>
        <begin position="1"/>
        <end position="318"/>
    </location>
</feature>
<feature type="region of interest" description="Interaction with substrate tRNA" evidence="1">
    <location>
        <begin position="41"/>
        <end position="44"/>
    </location>
</feature>
<feature type="region of interest" description="Interaction with substrate tRNA" evidence="1">
    <location>
        <begin position="165"/>
        <end position="169"/>
    </location>
</feature>
<feature type="region of interest" description="Interaction with substrate tRNA" evidence="1">
    <location>
        <begin position="246"/>
        <end position="251"/>
    </location>
</feature>
<feature type="region of interest" description="Interaction with substrate tRNA" evidence="1">
    <location>
        <begin position="279"/>
        <end position="286"/>
    </location>
</feature>
<feature type="binding site" evidence="1">
    <location>
        <begin position="16"/>
        <end position="23"/>
    </location>
    <ligand>
        <name>ATP</name>
        <dbReference type="ChEBI" id="CHEBI:30616"/>
    </ligand>
</feature>
<feature type="binding site" evidence="1">
    <location>
        <begin position="18"/>
        <end position="23"/>
    </location>
    <ligand>
        <name>substrate</name>
    </ligand>
</feature>
<feature type="site" description="Interaction with substrate tRNA" evidence="1">
    <location>
        <position position="107"/>
    </location>
</feature>
<feature type="site" description="Interaction with substrate tRNA" evidence="1">
    <location>
        <position position="129"/>
    </location>
</feature>
<accession>A6VN09</accession>